<comment type="function">
    <text evidence="1 4">Beta toxins bind voltage-independently at site-4 of sodium channels (Nav) and shift the voltage of activation toward more negative potentials thereby affecting sodium channel activation and promoting spontaneous and repetitive firing (By similarity). Induces immediate paralysis in crickets after injection, with a total paralysis occurring within 15-30 minutes and lasting for 1-2 hours. Is also lethal to vertebrate (chicks) when injected in very high dosages (more that 100 mg/kg).</text>
</comment>
<comment type="subcellular location">
    <subcellularLocation>
        <location evidence="4">Secreted</location>
    </subcellularLocation>
</comment>
<comment type="tissue specificity">
    <text evidence="4">Expressed by the venom gland.</text>
</comment>
<comment type="domain">
    <text evidence="5">Has the structural arrangement of an alpha-helix connected to antiparallel beta-sheets by disulfide bonds (CS-alpha/beta).</text>
</comment>
<comment type="toxic dose">
    <text evidence="4">PD(50) is 255 mg/kg of insects (crickets).</text>
</comment>
<comment type="similarity">
    <text evidence="5">Belongs to the long (4 C-C) scorpion toxin superfamily. Sodium channel inhibitor family. Beta subfamily.</text>
</comment>
<reference key="1">
    <citation type="journal article" date="2001" name="Toxicon">
        <title>Genes and peptides from the scorpion Centruroides sculpturatus Ewing, that recognize Na(+)-channels.</title>
        <authorList>
            <person name="Corona M."/>
            <person name="Valdez-Cruz N.A."/>
            <person name="Merino E."/>
            <person name="Zurita M."/>
            <person name="Possani L.D."/>
        </authorList>
    </citation>
    <scope>NUCLEOTIDE SEQUENCE [MRNA]</scope>
    <source>
        <tissue>Venom gland</tissue>
    </source>
</reference>
<reference key="2">
    <citation type="journal article" date="1974" name="Arch. Biochem. Biophys.">
        <title>Amino acid sequences of neurotoxic protein variants from the venom of Centruroides sculpturatus Ewing.</title>
        <authorList>
            <person name="Babin D.R."/>
            <person name="Watt D.D."/>
            <person name="Goos S.M."/>
            <person name="Mlejnek R.V."/>
        </authorList>
    </citation>
    <scope>PROTEIN SEQUENCE OF 20-84</scope>
    <scope>FUNCTION</scope>
    <scope>SUBCELLULAR LOCATION</scope>
    <scope>TISSUE SPECIFICITY</scope>
    <scope>TOXIC DOSE</scope>
    <source>
        <tissue>Venom</tissue>
    </source>
</reference>
<reference key="3">
    <citation type="journal article" date="1982" name="Toxicon">
        <title>The three-dimensional structure of scorpion neurotoxins.</title>
        <authorList>
            <person name="Fontecilla-Camps J.-C."/>
            <person name="Almassy R.J."/>
            <person name="Suddath F.L."/>
            <person name="Bugg C.E."/>
        </authorList>
    </citation>
    <scope>X-RAY CRYSTALLOGRAPHY (1.8 ANGSTROMS)</scope>
    <scope>SEQUENCE REVISION</scope>
    <scope>DISULFIDE BONDS</scope>
</reference>
<reference key="4">
    <citation type="journal article" date="1980" name="Proc. Natl. Acad. Sci. U.S.A.">
        <title>Three-dimensional structure of a protein from scorpion venom: a new structural class of neurotoxins.</title>
        <authorList>
            <person name="Fontecilla-Camps J.-C."/>
            <person name="Almassy R.J."/>
            <person name="Suddath F.L."/>
            <person name="Watt D.D."/>
            <person name="Bugg C.E."/>
        </authorList>
    </citation>
    <scope>X-RAY CRYSTALLOGRAPHY (3.0 ANGSTROMS) OF 20-84</scope>
</reference>
<reference key="5">
    <citation type="journal article" date="1983" name="J. Mol. Biol.">
        <title>Structure of variant-3 scorpion neurotoxin from Centruroides sculpturatus Ewing, refined at 1.8 A resolution.</title>
        <authorList>
            <person name="Almassy R.J."/>
            <person name="Fontecilla-Camps J.-C."/>
            <person name="Suddath F.L."/>
            <person name="Bugg C.E."/>
        </authorList>
    </citation>
    <scope>X-RAY CRYSTALLOGRAPHY (1.8 ANGSTROMS) OF 20-84</scope>
    <scope>DISULFIDE BONDS</scope>
</reference>
<reference key="6">
    <citation type="journal article" date="1992" name="J. Mol. Biol.">
        <title>Structure of scorpion toxin variant-3 at 1.2-A resolution.</title>
        <authorList>
            <person name="Zhao B."/>
            <person name="Carson M."/>
            <person name="Ealick S.E."/>
            <person name="Bugg C.E."/>
        </authorList>
    </citation>
    <scope>X-RAY CRYSTALLOGRAPHY (1.2 ANGSTROMS) OF 20-84</scope>
</reference>
<evidence type="ECO:0000250" key="1"/>
<evidence type="ECO:0000255" key="2"/>
<evidence type="ECO:0000255" key="3">
    <source>
        <dbReference type="PROSITE-ProRule" id="PRU01210"/>
    </source>
</evidence>
<evidence type="ECO:0000269" key="4">
    <source>
    </source>
</evidence>
<evidence type="ECO:0000305" key="5"/>
<evidence type="ECO:0007829" key="6">
    <source>
        <dbReference type="PDB" id="2SN3"/>
    </source>
</evidence>
<keyword id="KW-0002">3D-structure</keyword>
<keyword id="KW-0027">Amidation</keyword>
<keyword id="KW-0903">Direct protein sequencing</keyword>
<keyword id="KW-1015">Disulfide bond</keyword>
<keyword id="KW-0872">Ion channel impairing toxin</keyword>
<keyword id="KW-0528">Neurotoxin</keyword>
<keyword id="KW-0964">Secreted</keyword>
<keyword id="KW-0732">Signal</keyword>
<keyword id="KW-0800">Toxin</keyword>
<keyword id="KW-0738">Voltage-gated sodium channel impairing toxin</keyword>
<name>SCX3_CENSC</name>
<feature type="signal peptide" evidence="4">
    <location>
        <begin position="1"/>
        <end position="19"/>
    </location>
</feature>
<feature type="peptide" id="PRO_0000035290" description="Toxin CsEv3">
    <location>
        <begin position="20"/>
        <end position="84"/>
    </location>
</feature>
<feature type="domain" description="LCN-type CS-alpha/beta" evidence="3">
    <location>
        <begin position="20"/>
        <end position="85"/>
    </location>
</feature>
<feature type="modified residue" description="Cysteine amide" evidence="2">
    <location>
        <position position="84"/>
    </location>
</feature>
<feature type="disulfide bond" evidence="3">
    <location>
        <begin position="31"/>
        <end position="84"/>
    </location>
</feature>
<feature type="disulfide bond" evidence="3">
    <location>
        <begin position="35"/>
        <end position="60"/>
    </location>
</feature>
<feature type="disulfide bond" evidence="3">
    <location>
        <begin position="44"/>
        <end position="65"/>
    </location>
</feature>
<feature type="disulfide bond" evidence="3">
    <location>
        <begin position="48"/>
        <end position="67"/>
    </location>
</feature>
<feature type="sequence variant" description="In CsEv3B*.">
    <location>
        <position position="6"/>
    </location>
</feature>
<feature type="sequence variant" description="In CsEv3A.">
    <original>N</original>
    <variation>K</variation>
    <location>
        <position position="26"/>
    </location>
</feature>
<feature type="sequence variant" description="In CsEv3A.">
    <original>T</original>
    <variation>D</variation>
    <location>
        <position position="29"/>
    </location>
</feature>
<feature type="sequence variant" description="In CsEv3B*.">
    <original>C</original>
    <variation>Y</variation>
    <location>
        <position position="35"/>
    </location>
</feature>
<feature type="sequence variant" description="In CsEv3A.">
    <original>K</original>
    <variation>T</variation>
    <location>
        <position position="46"/>
    </location>
</feature>
<feature type="turn" evidence="6">
    <location>
        <begin position="27"/>
        <end position="29"/>
    </location>
</feature>
<feature type="helix" evidence="6">
    <location>
        <begin position="42"/>
        <end position="49"/>
    </location>
</feature>
<feature type="turn" evidence="6">
    <location>
        <begin position="51"/>
        <end position="53"/>
    </location>
</feature>
<feature type="strand" evidence="6">
    <location>
        <begin position="56"/>
        <end position="61"/>
    </location>
</feature>
<feature type="strand" evidence="6">
    <location>
        <begin position="64"/>
        <end position="69"/>
    </location>
</feature>
<organism>
    <name type="scientific">Centruroides sculpturatus</name>
    <name type="common">Arizona bark scorpion</name>
    <dbReference type="NCBI Taxonomy" id="218467"/>
    <lineage>
        <taxon>Eukaryota</taxon>
        <taxon>Metazoa</taxon>
        <taxon>Ecdysozoa</taxon>
        <taxon>Arthropoda</taxon>
        <taxon>Chelicerata</taxon>
        <taxon>Arachnida</taxon>
        <taxon>Scorpiones</taxon>
        <taxon>Buthida</taxon>
        <taxon>Buthoidea</taxon>
        <taxon>Buthidae</taxon>
        <taxon>Centruroides</taxon>
    </lineage>
</organism>
<sequence length="87" mass="9480">MNSLLMITACLFLIGTVWAKEGYLVNKSTGCKYGCLKLGENEGCDKECKAKNQGGSYGYCYAFACWCEGLPESTPTYPLPNKSCGKK</sequence>
<proteinExistence type="evidence at protein level"/>
<accession>P01494</accession>
<accession>Q95WB9</accession>
<accession>Q95WC0</accession>
<protein>
    <recommendedName>
        <fullName>Toxin CsEv3</fullName>
        <shortName>CsE v3</shortName>
    </recommendedName>
    <alternativeName>
        <fullName>Neurotoxin 3</fullName>
    </alternativeName>
</protein>
<dbReference type="EMBL" id="AF338461">
    <property type="protein sequence ID" value="AAL23429.1"/>
    <property type="molecule type" value="mRNA"/>
</dbReference>
<dbReference type="EMBL" id="AF338462">
    <property type="protein sequence ID" value="AAL23430.1"/>
    <property type="molecule type" value="mRNA"/>
</dbReference>
<dbReference type="PDB" id="2SN3">
    <property type="method" value="X-ray"/>
    <property type="resolution" value="1.20 A"/>
    <property type="chains" value="A=20-84"/>
</dbReference>
<dbReference type="PDBsum" id="2SN3"/>
<dbReference type="SMR" id="P01494"/>
<dbReference type="EvolutionaryTrace" id="P01494"/>
<dbReference type="GO" id="GO:0005576">
    <property type="term" value="C:extracellular region"/>
    <property type="evidence" value="ECO:0007669"/>
    <property type="project" value="UniProtKB-SubCell"/>
</dbReference>
<dbReference type="GO" id="GO:0019871">
    <property type="term" value="F:sodium channel inhibitor activity"/>
    <property type="evidence" value="ECO:0007669"/>
    <property type="project" value="InterPro"/>
</dbReference>
<dbReference type="GO" id="GO:0090729">
    <property type="term" value="F:toxin activity"/>
    <property type="evidence" value="ECO:0007669"/>
    <property type="project" value="UniProtKB-KW"/>
</dbReference>
<dbReference type="GO" id="GO:0006952">
    <property type="term" value="P:defense response"/>
    <property type="evidence" value="ECO:0007669"/>
    <property type="project" value="InterPro"/>
</dbReference>
<dbReference type="CDD" id="cd23106">
    <property type="entry name" value="neurotoxins_LC_scorpion"/>
    <property type="match status" value="1"/>
</dbReference>
<dbReference type="FunFam" id="3.30.30.10:FF:000002">
    <property type="entry name" value="Alpha-like toxin BmK-M1"/>
    <property type="match status" value="1"/>
</dbReference>
<dbReference type="Gene3D" id="3.30.30.10">
    <property type="entry name" value="Knottin, scorpion toxin-like"/>
    <property type="match status" value="1"/>
</dbReference>
<dbReference type="InterPro" id="IPR044062">
    <property type="entry name" value="LCN-type_CS_alpha_beta_dom"/>
</dbReference>
<dbReference type="InterPro" id="IPR003614">
    <property type="entry name" value="Scorpion_toxin-like"/>
</dbReference>
<dbReference type="InterPro" id="IPR036574">
    <property type="entry name" value="Scorpion_toxin-like_sf"/>
</dbReference>
<dbReference type="InterPro" id="IPR018218">
    <property type="entry name" value="Scorpion_toxinL"/>
</dbReference>
<dbReference type="InterPro" id="IPR002061">
    <property type="entry name" value="Scorpion_toxinL/defensin"/>
</dbReference>
<dbReference type="Pfam" id="PF00537">
    <property type="entry name" value="Toxin_3"/>
    <property type="match status" value="1"/>
</dbReference>
<dbReference type="PRINTS" id="PR00285">
    <property type="entry name" value="SCORPNTOXIN"/>
</dbReference>
<dbReference type="SMART" id="SM00505">
    <property type="entry name" value="Knot1"/>
    <property type="match status" value="1"/>
</dbReference>
<dbReference type="SUPFAM" id="SSF57095">
    <property type="entry name" value="Scorpion toxin-like"/>
    <property type="match status" value="1"/>
</dbReference>
<dbReference type="PROSITE" id="PS51863">
    <property type="entry name" value="LCN_CSAB"/>
    <property type="match status" value="1"/>
</dbReference>